<proteinExistence type="inferred from homology"/>
<protein>
    <recommendedName>
        <fullName evidence="1">Enolase</fullName>
        <ecNumber evidence="1">4.2.1.11</ecNumber>
    </recommendedName>
    <alternativeName>
        <fullName evidence="1">2-phospho-D-glycerate hydro-lyase</fullName>
    </alternativeName>
    <alternativeName>
        <fullName evidence="1">2-phosphoglycerate dehydratase</fullName>
    </alternativeName>
</protein>
<sequence>MFIDNVSAIEVMDSRGNPTVKTTVELSDGTKESAIVPSGASTGKREALELRDGGSRYMGKGVLKAVENVNAQISDALIGLSPFNQAVIDATMKELDGTDNYGNLGANAVLGVSMAVARAAAKSLGIPLYRYLGGANAMVIPTPMLNIINGGSHADNSVDFQEYMIMPVGFEDFATSLQASAEVYHNLKAILKSKKHNTALGDEGGFAPDLSSNEEPIQIIMQAIEKAGYKAGEQMAIALDVAASELVSDGGYRLDSENRTVTSAELVDYYVDLCNKYPIVSIEDGLSEDDWDGWKLLTEKLGDRVQLVGDDLFVTNATILNEGIKKGIANSILIKPNQIGSVSETMQTVRLAQRNGYKCVMSHRSGESEDAFIADFAVALNCGEIKTGSTARGERTAKYNRLLEIENEVVYGEYLGSELFN</sequence>
<name>ENO_SULDN</name>
<reference key="1">
    <citation type="journal article" date="2008" name="Appl. Environ. Microbiol.">
        <title>Genome of the epsilonproteobacterial chemolithoautotroph Sulfurimonas denitrificans.</title>
        <authorList>
            <person name="Sievert S.M."/>
            <person name="Scott K.M."/>
            <person name="Klotz M.G."/>
            <person name="Chain P.S.G."/>
            <person name="Hauser L.J."/>
            <person name="Hemp J."/>
            <person name="Huegler M."/>
            <person name="Land M."/>
            <person name="Lapidus A."/>
            <person name="Larimer F.W."/>
            <person name="Lucas S."/>
            <person name="Malfatti S.A."/>
            <person name="Meyer F."/>
            <person name="Paulsen I.T."/>
            <person name="Ren Q."/>
            <person name="Simon J."/>
            <person name="Bailey K."/>
            <person name="Diaz E."/>
            <person name="Fitzpatrick K.A."/>
            <person name="Glover B."/>
            <person name="Gwatney N."/>
            <person name="Korajkic A."/>
            <person name="Long A."/>
            <person name="Mobberley J.M."/>
            <person name="Pantry S.N."/>
            <person name="Pazder G."/>
            <person name="Peterson S."/>
            <person name="Quintanilla J.D."/>
            <person name="Sprinkle R."/>
            <person name="Stephens J."/>
            <person name="Thomas P."/>
            <person name="Vaughn R."/>
            <person name="Weber M.J."/>
            <person name="Wooten L.L."/>
        </authorList>
    </citation>
    <scope>NUCLEOTIDE SEQUENCE [LARGE SCALE GENOMIC DNA]</scope>
    <source>
        <strain>ATCC 33889 / DSM 1251</strain>
    </source>
</reference>
<feature type="chain" id="PRO_0000267132" description="Enolase">
    <location>
        <begin position="1"/>
        <end position="421"/>
    </location>
</feature>
<feature type="active site" description="Proton donor" evidence="1">
    <location>
        <position position="203"/>
    </location>
</feature>
<feature type="active site" description="Proton acceptor" evidence="1">
    <location>
        <position position="335"/>
    </location>
</feature>
<feature type="binding site" evidence="1">
    <location>
        <position position="161"/>
    </location>
    <ligand>
        <name>(2R)-2-phosphoglycerate</name>
        <dbReference type="ChEBI" id="CHEBI:58289"/>
    </ligand>
</feature>
<feature type="binding site" evidence="1">
    <location>
        <position position="240"/>
    </location>
    <ligand>
        <name>Mg(2+)</name>
        <dbReference type="ChEBI" id="CHEBI:18420"/>
    </ligand>
</feature>
<feature type="binding site" evidence="1">
    <location>
        <position position="283"/>
    </location>
    <ligand>
        <name>Mg(2+)</name>
        <dbReference type="ChEBI" id="CHEBI:18420"/>
    </ligand>
</feature>
<feature type="binding site" evidence="1">
    <location>
        <position position="310"/>
    </location>
    <ligand>
        <name>Mg(2+)</name>
        <dbReference type="ChEBI" id="CHEBI:18420"/>
    </ligand>
</feature>
<feature type="binding site" evidence="1">
    <location>
        <position position="335"/>
    </location>
    <ligand>
        <name>(2R)-2-phosphoglycerate</name>
        <dbReference type="ChEBI" id="CHEBI:58289"/>
    </ligand>
</feature>
<feature type="binding site" evidence="1">
    <location>
        <position position="364"/>
    </location>
    <ligand>
        <name>(2R)-2-phosphoglycerate</name>
        <dbReference type="ChEBI" id="CHEBI:58289"/>
    </ligand>
</feature>
<feature type="binding site" evidence="1">
    <location>
        <position position="365"/>
    </location>
    <ligand>
        <name>(2R)-2-phosphoglycerate</name>
        <dbReference type="ChEBI" id="CHEBI:58289"/>
    </ligand>
</feature>
<feature type="binding site" evidence="1">
    <location>
        <position position="386"/>
    </location>
    <ligand>
        <name>(2R)-2-phosphoglycerate</name>
        <dbReference type="ChEBI" id="CHEBI:58289"/>
    </ligand>
</feature>
<gene>
    <name evidence="1" type="primary">eno</name>
    <name type="ordered locus">Suden_2001</name>
</gene>
<dbReference type="EC" id="4.2.1.11" evidence="1"/>
<dbReference type="EMBL" id="CP000153">
    <property type="protein sequence ID" value="ABB45275.1"/>
    <property type="molecule type" value="Genomic_DNA"/>
</dbReference>
<dbReference type="RefSeq" id="WP_011373615.1">
    <property type="nucleotide sequence ID" value="NC_007575.1"/>
</dbReference>
<dbReference type="SMR" id="Q30P06"/>
<dbReference type="STRING" id="326298.Suden_2001"/>
<dbReference type="KEGG" id="tdn:Suden_2001"/>
<dbReference type="eggNOG" id="COG0148">
    <property type="taxonomic scope" value="Bacteria"/>
</dbReference>
<dbReference type="HOGENOM" id="CLU_031223_2_1_7"/>
<dbReference type="OrthoDB" id="9804716at2"/>
<dbReference type="UniPathway" id="UPA00109">
    <property type="reaction ID" value="UER00187"/>
</dbReference>
<dbReference type="Proteomes" id="UP000002714">
    <property type="component" value="Chromosome"/>
</dbReference>
<dbReference type="GO" id="GO:0009986">
    <property type="term" value="C:cell surface"/>
    <property type="evidence" value="ECO:0007669"/>
    <property type="project" value="UniProtKB-SubCell"/>
</dbReference>
<dbReference type="GO" id="GO:0005576">
    <property type="term" value="C:extracellular region"/>
    <property type="evidence" value="ECO:0007669"/>
    <property type="project" value="UniProtKB-SubCell"/>
</dbReference>
<dbReference type="GO" id="GO:0000015">
    <property type="term" value="C:phosphopyruvate hydratase complex"/>
    <property type="evidence" value="ECO:0007669"/>
    <property type="project" value="InterPro"/>
</dbReference>
<dbReference type="GO" id="GO:0000287">
    <property type="term" value="F:magnesium ion binding"/>
    <property type="evidence" value="ECO:0007669"/>
    <property type="project" value="UniProtKB-UniRule"/>
</dbReference>
<dbReference type="GO" id="GO:0004634">
    <property type="term" value="F:phosphopyruvate hydratase activity"/>
    <property type="evidence" value="ECO:0007669"/>
    <property type="project" value="UniProtKB-UniRule"/>
</dbReference>
<dbReference type="GO" id="GO:0006096">
    <property type="term" value="P:glycolytic process"/>
    <property type="evidence" value="ECO:0007669"/>
    <property type="project" value="UniProtKB-UniRule"/>
</dbReference>
<dbReference type="CDD" id="cd03313">
    <property type="entry name" value="enolase"/>
    <property type="match status" value="1"/>
</dbReference>
<dbReference type="Gene3D" id="3.20.20.120">
    <property type="entry name" value="Enolase-like C-terminal domain"/>
    <property type="match status" value="1"/>
</dbReference>
<dbReference type="Gene3D" id="3.30.390.10">
    <property type="entry name" value="Enolase-like, N-terminal domain"/>
    <property type="match status" value="1"/>
</dbReference>
<dbReference type="HAMAP" id="MF_00318">
    <property type="entry name" value="Enolase"/>
    <property type="match status" value="1"/>
</dbReference>
<dbReference type="InterPro" id="IPR000941">
    <property type="entry name" value="Enolase"/>
</dbReference>
<dbReference type="InterPro" id="IPR036849">
    <property type="entry name" value="Enolase-like_C_sf"/>
</dbReference>
<dbReference type="InterPro" id="IPR029017">
    <property type="entry name" value="Enolase-like_N"/>
</dbReference>
<dbReference type="InterPro" id="IPR020810">
    <property type="entry name" value="Enolase_C"/>
</dbReference>
<dbReference type="InterPro" id="IPR020809">
    <property type="entry name" value="Enolase_CS"/>
</dbReference>
<dbReference type="InterPro" id="IPR020811">
    <property type="entry name" value="Enolase_N"/>
</dbReference>
<dbReference type="NCBIfam" id="TIGR01060">
    <property type="entry name" value="eno"/>
    <property type="match status" value="1"/>
</dbReference>
<dbReference type="PANTHER" id="PTHR11902">
    <property type="entry name" value="ENOLASE"/>
    <property type="match status" value="1"/>
</dbReference>
<dbReference type="PANTHER" id="PTHR11902:SF1">
    <property type="entry name" value="ENOLASE"/>
    <property type="match status" value="1"/>
</dbReference>
<dbReference type="Pfam" id="PF00113">
    <property type="entry name" value="Enolase_C"/>
    <property type="match status" value="1"/>
</dbReference>
<dbReference type="Pfam" id="PF03952">
    <property type="entry name" value="Enolase_N"/>
    <property type="match status" value="1"/>
</dbReference>
<dbReference type="PIRSF" id="PIRSF001400">
    <property type="entry name" value="Enolase"/>
    <property type="match status" value="1"/>
</dbReference>
<dbReference type="PRINTS" id="PR00148">
    <property type="entry name" value="ENOLASE"/>
</dbReference>
<dbReference type="SFLD" id="SFLDS00001">
    <property type="entry name" value="Enolase"/>
    <property type="match status" value="1"/>
</dbReference>
<dbReference type="SFLD" id="SFLDF00002">
    <property type="entry name" value="enolase"/>
    <property type="match status" value="1"/>
</dbReference>
<dbReference type="SMART" id="SM01192">
    <property type="entry name" value="Enolase_C"/>
    <property type="match status" value="1"/>
</dbReference>
<dbReference type="SMART" id="SM01193">
    <property type="entry name" value="Enolase_N"/>
    <property type="match status" value="1"/>
</dbReference>
<dbReference type="SUPFAM" id="SSF51604">
    <property type="entry name" value="Enolase C-terminal domain-like"/>
    <property type="match status" value="1"/>
</dbReference>
<dbReference type="SUPFAM" id="SSF54826">
    <property type="entry name" value="Enolase N-terminal domain-like"/>
    <property type="match status" value="1"/>
</dbReference>
<dbReference type="PROSITE" id="PS00164">
    <property type="entry name" value="ENOLASE"/>
    <property type="match status" value="1"/>
</dbReference>
<organism>
    <name type="scientific">Sulfurimonas denitrificans (strain ATCC 33889 / DSM 1251)</name>
    <name type="common">Thiomicrospira denitrificans (strain ATCC 33889 / DSM 1251)</name>
    <dbReference type="NCBI Taxonomy" id="326298"/>
    <lineage>
        <taxon>Bacteria</taxon>
        <taxon>Pseudomonadati</taxon>
        <taxon>Campylobacterota</taxon>
        <taxon>Epsilonproteobacteria</taxon>
        <taxon>Campylobacterales</taxon>
        <taxon>Sulfurimonadaceae</taxon>
        <taxon>Sulfurimonas</taxon>
    </lineage>
</organism>
<evidence type="ECO:0000255" key="1">
    <source>
        <dbReference type="HAMAP-Rule" id="MF_00318"/>
    </source>
</evidence>
<keyword id="KW-0963">Cytoplasm</keyword>
<keyword id="KW-0324">Glycolysis</keyword>
<keyword id="KW-0456">Lyase</keyword>
<keyword id="KW-0460">Magnesium</keyword>
<keyword id="KW-0479">Metal-binding</keyword>
<keyword id="KW-1185">Reference proteome</keyword>
<keyword id="KW-0964">Secreted</keyword>
<comment type="function">
    <text evidence="1">Catalyzes the reversible conversion of 2-phosphoglycerate (2-PG) into phosphoenolpyruvate (PEP). It is essential for the degradation of carbohydrates via glycolysis.</text>
</comment>
<comment type="catalytic activity">
    <reaction evidence="1">
        <text>(2R)-2-phosphoglycerate = phosphoenolpyruvate + H2O</text>
        <dbReference type="Rhea" id="RHEA:10164"/>
        <dbReference type="ChEBI" id="CHEBI:15377"/>
        <dbReference type="ChEBI" id="CHEBI:58289"/>
        <dbReference type="ChEBI" id="CHEBI:58702"/>
        <dbReference type="EC" id="4.2.1.11"/>
    </reaction>
</comment>
<comment type="cofactor">
    <cofactor evidence="1">
        <name>Mg(2+)</name>
        <dbReference type="ChEBI" id="CHEBI:18420"/>
    </cofactor>
    <text evidence="1">Binds a second Mg(2+) ion via substrate during catalysis.</text>
</comment>
<comment type="pathway">
    <text evidence="1">Carbohydrate degradation; glycolysis; pyruvate from D-glyceraldehyde 3-phosphate: step 4/5.</text>
</comment>
<comment type="subcellular location">
    <subcellularLocation>
        <location evidence="1">Cytoplasm</location>
    </subcellularLocation>
    <subcellularLocation>
        <location evidence="1">Secreted</location>
    </subcellularLocation>
    <subcellularLocation>
        <location evidence="1">Cell surface</location>
    </subcellularLocation>
    <text evidence="1">Fractions of enolase are present in both the cytoplasm and on the cell surface.</text>
</comment>
<comment type="similarity">
    <text evidence="1">Belongs to the enolase family.</text>
</comment>
<accession>Q30P06</accession>